<feature type="chain" id="PRO_1000124393" description="Mannitol-1-phosphate 5-dehydrogenase">
    <location>
        <begin position="1"/>
        <end position="378"/>
    </location>
</feature>
<feature type="binding site" evidence="1">
    <location>
        <begin position="4"/>
        <end position="15"/>
    </location>
    <ligand>
        <name>NAD(+)</name>
        <dbReference type="ChEBI" id="CHEBI:57540"/>
    </ligand>
</feature>
<sequence>MKHSVHFGAGNIGRGFIGEILFKNGFHIDFVDVNNQIIHALNEKGKYEIEIAQKGQSRIEVTNVAGINSKEHPEQVIEAIQKTDIITTAIGPNILPFIAELLAKGIEARRVAGNTQALDVMACENMIGGSQFLYQEVKKYLSPEGLTFADNYIGFPNAAVDRIVPTQSHEDSLFVMVEPFNEWVVETKRLKNPDLRLEDVHYEEDLEPFIERKLFSVNSGHATSAYIGAHYGAKTILEALQNPNIKSRIESVLAEIRSLLIAKWNFDKKELENYHKVIIERFENPFIVDEVSRVARTPIRKLGYNERFIRPIRELKELSLSYKNLLKTVGYAFDYRDVNDEESIRLGELLAKQSVKDVVIQVTGLDDQELIERIVEYI</sequence>
<organism>
    <name type="scientific">Streptococcus pneumoniae (strain ATCC 700669 / Spain 23F-1)</name>
    <dbReference type="NCBI Taxonomy" id="561276"/>
    <lineage>
        <taxon>Bacteria</taxon>
        <taxon>Bacillati</taxon>
        <taxon>Bacillota</taxon>
        <taxon>Bacilli</taxon>
        <taxon>Lactobacillales</taxon>
        <taxon>Streptococcaceae</taxon>
        <taxon>Streptococcus</taxon>
    </lineage>
</organism>
<keyword id="KW-0520">NAD</keyword>
<keyword id="KW-0560">Oxidoreductase</keyword>
<gene>
    <name evidence="1" type="primary">mtlD</name>
    <name type="ordered locus">SPN23F03730</name>
</gene>
<protein>
    <recommendedName>
        <fullName evidence="1">Mannitol-1-phosphate 5-dehydrogenase</fullName>
        <ecNumber evidence="1">1.1.1.17</ecNumber>
    </recommendedName>
</protein>
<reference key="1">
    <citation type="journal article" date="2009" name="J. Bacteriol.">
        <title>Role of conjugative elements in the evolution of the multidrug-resistant pandemic clone Streptococcus pneumoniae Spain23F ST81.</title>
        <authorList>
            <person name="Croucher N.J."/>
            <person name="Walker D."/>
            <person name="Romero P."/>
            <person name="Lennard N."/>
            <person name="Paterson G.K."/>
            <person name="Bason N.C."/>
            <person name="Mitchell A.M."/>
            <person name="Quail M.A."/>
            <person name="Andrew P.W."/>
            <person name="Parkhill J."/>
            <person name="Bentley S.D."/>
            <person name="Mitchell T.J."/>
        </authorList>
    </citation>
    <scope>NUCLEOTIDE SEQUENCE [LARGE SCALE GENOMIC DNA]</scope>
    <source>
        <strain>ATCC 700669 / Spain 23F-1</strain>
    </source>
</reference>
<comment type="catalytic activity">
    <reaction evidence="1">
        <text>D-mannitol 1-phosphate + NAD(+) = beta-D-fructose 6-phosphate + NADH + H(+)</text>
        <dbReference type="Rhea" id="RHEA:19661"/>
        <dbReference type="ChEBI" id="CHEBI:15378"/>
        <dbReference type="ChEBI" id="CHEBI:57540"/>
        <dbReference type="ChEBI" id="CHEBI:57634"/>
        <dbReference type="ChEBI" id="CHEBI:57945"/>
        <dbReference type="ChEBI" id="CHEBI:61381"/>
        <dbReference type="EC" id="1.1.1.17"/>
    </reaction>
</comment>
<comment type="similarity">
    <text evidence="1">Belongs to the mannitol dehydrogenase family.</text>
</comment>
<name>MTLD_STRPJ</name>
<evidence type="ECO:0000255" key="1">
    <source>
        <dbReference type="HAMAP-Rule" id="MF_00196"/>
    </source>
</evidence>
<accession>B8ZLG6</accession>
<proteinExistence type="inferred from homology"/>
<dbReference type="EC" id="1.1.1.17" evidence="1"/>
<dbReference type="EMBL" id="FM211187">
    <property type="protein sequence ID" value="CAR68224.1"/>
    <property type="molecule type" value="Genomic_DNA"/>
</dbReference>
<dbReference type="RefSeq" id="WP_000682970.1">
    <property type="nucleotide sequence ID" value="NC_011900.1"/>
</dbReference>
<dbReference type="SMR" id="B8ZLG6"/>
<dbReference type="KEGG" id="sne:SPN23F03730"/>
<dbReference type="HOGENOM" id="CLU_036089_2_0_9"/>
<dbReference type="GO" id="GO:0005829">
    <property type="term" value="C:cytosol"/>
    <property type="evidence" value="ECO:0007669"/>
    <property type="project" value="TreeGrafter"/>
</dbReference>
<dbReference type="GO" id="GO:0008926">
    <property type="term" value="F:mannitol-1-phosphate 5-dehydrogenase activity"/>
    <property type="evidence" value="ECO:0007669"/>
    <property type="project" value="UniProtKB-UniRule"/>
</dbReference>
<dbReference type="GO" id="GO:0019592">
    <property type="term" value="P:mannitol catabolic process"/>
    <property type="evidence" value="ECO:0007669"/>
    <property type="project" value="TreeGrafter"/>
</dbReference>
<dbReference type="FunFam" id="1.10.1040.10:FF:000042">
    <property type="entry name" value="Mannitol-1-phosphate 5-dehydrogenase"/>
    <property type="match status" value="1"/>
</dbReference>
<dbReference type="FunFam" id="3.40.50.720:FF:000586">
    <property type="entry name" value="Mannitol-1-phosphate 5-dehydrogenase"/>
    <property type="match status" value="1"/>
</dbReference>
<dbReference type="Gene3D" id="1.10.1040.10">
    <property type="entry name" value="N-(1-d-carboxylethyl)-l-norvaline Dehydrogenase, domain 2"/>
    <property type="match status" value="1"/>
</dbReference>
<dbReference type="Gene3D" id="3.40.50.720">
    <property type="entry name" value="NAD(P)-binding Rossmann-like Domain"/>
    <property type="match status" value="1"/>
</dbReference>
<dbReference type="HAMAP" id="MF_00196">
    <property type="entry name" value="Mannitol_dehydrog"/>
    <property type="match status" value="1"/>
</dbReference>
<dbReference type="InterPro" id="IPR008927">
    <property type="entry name" value="6-PGluconate_DH-like_C_sf"/>
</dbReference>
<dbReference type="InterPro" id="IPR013328">
    <property type="entry name" value="6PGD_dom2"/>
</dbReference>
<dbReference type="InterPro" id="IPR023028">
    <property type="entry name" value="Mannitol_1_phos_5_DH"/>
</dbReference>
<dbReference type="InterPro" id="IPR000669">
    <property type="entry name" value="Mannitol_DH"/>
</dbReference>
<dbReference type="InterPro" id="IPR013118">
    <property type="entry name" value="Mannitol_DH_C"/>
</dbReference>
<dbReference type="InterPro" id="IPR023027">
    <property type="entry name" value="Mannitol_DH_CS"/>
</dbReference>
<dbReference type="InterPro" id="IPR013131">
    <property type="entry name" value="Mannitol_DH_N"/>
</dbReference>
<dbReference type="InterPro" id="IPR036291">
    <property type="entry name" value="NAD(P)-bd_dom_sf"/>
</dbReference>
<dbReference type="NCBIfam" id="NF002647">
    <property type="entry name" value="PRK02318.1-3"/>
    <property type="match status" value="1"/>
</dbReference>
<dbReference type="NCBIfam" id="NF002652">
    <property type="entry name" value="PRK02318.2-5"/>
    <property type="match status" value="1"/>
</dbReference>
<dbReference type="PANTHER" id="PTHR30524:SF0">
    <property type="entry name" value="ALTRONATE OXIDOREDUCTASE-RELATED"/>
    <property type="match status" value="1"/>
</dbReference>
<dbReference type="PANTHER" id="PTHR30524">
    <property type="entry name" value="MANNITOL-1-PHOSPHATE 5-DEHYDROGENASE"/>
    <property type="match status" value="1"/>
</dbReference>
<dbReference type="Pfam" id="PF01232">
    <property type="entry name" value="Mannitol_dh"/>
    <property type="match status" value="1"/>
</dbReference>
<dbReference type="Pfam" id="PF08125">
    <property type="entry name" value="Mannitol_dh_C"/>
    <property type="match status" value="1"/>
</dbReference>
<dbReference type="PRINTS" id="PR00084">
    <property type="entry name" value="MTLDHDRGNASE"/>
</dbReference>
<dbReference type="SUPFAM" id="SSF48179">
    <property type="entry name" value="6-phosphogluconate dehydrogenase C-terminal domain-like"/>
    <property type="match status" value="1"/>
</dbReference>
<dbReference type="SUPFAM" id="SSF51735">
    <property type="entry name" value="NAD(P)-binding Rossmann-fold domains"/>
    <property type="match status" value="1"/>
</dbReference>
<dbReference type="PROSITE" id="PS00974">
    <property type="entry name" value="MANNITOL_DHGENASE"/>
    <property type="match status" value="1"/>
</dbReference>